<proteinExistence type="inferred from homology"/>
<protein>
    <recommendedName>
        <fullName evidence="1">NADH-quinone oxidoreductase subunit I</fullName>
        <ecNumber evidence="1">7.1.1.-</ecNumber>
    </recommendedName>
    <alternativeName>
        <fullName evidence="1">NADH dehydrogenase I subunit I</fullName>
    </alternativeName>
    <alternativeName>
        <fullName evidence="1">NDH-1 subunit I</fullName>
    </alternativeName>
</protein>
<sequence>MAGSPEPKSMREQFWDPIAGFGVTFRTMFKKVVTEQYPFDKYPTAPRFHGRHQLNRWPDGLEKCVGCELCAWACPADAIYVEGASNSDDPDGGERFSPGERYGRVYQINYLRCILCGLCIEACPTRALTMTNEYELADDNRADLIYEKSDLLAPLLPGMEQPPHPMRLGDDEGAYYRGEFAAPAPTAPGSSTEAGA</sequence>
<name>NUOI_NOCSJ</name>
<accession>A1SE35</accession>
<organism>
    <name type="scientific">Nocardioides sp. (strain ATCC BAA-499 / JS614)</name>
    <dbReference type="NCBI Taxonomy" id="196162"/>
    <lineage>
        <taxon>Bacteria</taxon>
        <taxon>Bacillati</taxon>
        <taxon>Actinomycetota</taxon>
        <taxon>Actinomycetes</taxon>
        <taxon>Propionibacteriales</taxon>
        <taxon>Nocardioidaceae</taxon>
        <taxon>Nocardioides</taxon>
    </lineage>
</organism>
<comment type="function">
    <text evidence="1">NDH-1 shuttles electrons from NADH, via FMN and iron-sulfur (Fe-S) centers, to quinones in the respiratory chain. The immediate electron acceptor for the enzyme in this species is believed to be ubiquinone. Couples the redox reaction to proton translocation (for every two electrons transferred, four hydrogen ions are translocated across the cytoplasmic membrane), and thus conserves the redox energy in a proton gradient.</text>
</comment>
<comment type="catalytic activity">
    <reaction evidence="1">
        <text>a quinone + NADH + 5 H(+)(in) = a quinol + NAD(+) + 4 H(+)(out)</text>
        <dbReference type="Rhea" id="RHEA:57888"/>
        <dbReference type="ChEBI" id="CHEBI:15378"/>
        <dbReference type="ChEBI" id="CHEBI:24646"/>
        <dbReference type="ChEBI" id="CHEBI:57540"/>
        <dbReference type="ChEBI" id="CHEBI:57945"/>
        <dbReference type="ChEBI" id="CHEBI:132124"/>
    </reaction>
</comment>
<comment type="cofactor">
    <cofactor evidence="1">
        <name>[4Fe-4S] cluster</name>
        <dbReference type="ChEBI" id="CHEBI:49883"/>
    </cofactor>
    <text evidence="1">Binds 2 [4Fe-4S] clusters per subunit.</text>
</comment>
<comment type="subunit">
    <text evidence="1">NDH-1 is composed of 14 different subunits. Subunits NuoA, H, J, K, L, M, N constitute the membrane sector of the complex.</text>
</comment>
<comment type="subcellular location">
    <subcellularLocation>
        <location evidence="1">Cell membrane</location>
        <topology evidence="1">Peripheral membrane protein</topology>
    </subcellularLocation>
</comment>
<comment type="similarity">
    <text evidence="1">Belongs to the complex I 23 kDa subunit family.</text>
</comment>
<feature type="chain" id="PRO_0000298525" description="NADH-quinone oxidoreductase subunit I">
    <location>
        <begin position="1"/>
        <end position="196"/>
    </location>
</feature>
<feature type="domain" description="4Fe-4S ferredoxin-type 1" evidence="1">
    <location>
        <begin position="54"/>
        <end position="84"/>
    </location>
</feature>
<feature type="domain" description="4Fe-4S ferredoxin-type 2" evidence="1">
    <location>
        <begin position="104"/>
        <end position="133"/>
    </location>
</feature>
<feature type="binding site" evidence="1">
    <location>
        <position position="64"/>
    </location>
    <ligand>
        <name>[4Fe-4S] cluster</name>
        <dbReference type="ChEBI" id="CHEBI:49883"/>
        <label>1</label>
    </ligand>
</feature>
<feature type="binding site" evidence="1">
    <location>
        <position position="67"/>
    </location>
    <ligand>
        <name>[4Fe-4S] cluster</name>
        <dbReference type="ChEBI" id="CHEBI:49883"/>
        <label>1</label>
    </ligand>
</feature>
<feature type="binding site" evidence="1">
    <location>
        <position position="70"/>
    </location>
    <ligand>
        <name>[4Fe-4S] cluster</name>
        <dbReference type="ChEBI" id="CHEBI:49883"/>
        <label>1</label>
    </ligand>
</feature>
<feature type="binding site" evidence="1">
    <location>
        <position position="74"/>
    </location>
    <ligand>
        <name>[4Fe-4S] cluster</name>
        <dbReference type="ChEBI" id="CHEBI:49883"/>
        <label>2</label>
    </ligand>
</feature>
<feature type="binding site" evidence="1">
    <location>
        <position position="113"/>
    </location>
    <ligand>
        <name>[4Fe-4S] cluster</name>
        <dbReference type="ChEBI" id="CHEBI:49883"/>
        <label>2</label>
    </ligand>
</feature>
<feature type="binding site" evidence="1">
    <location>
        <position position="116"/>
    </location>
    <ligand>
        <name>[4Fe-4S] cluster</name>
        <dbReference type="ChEBI" id="CHEBI:49883"/>
        <label>2</label>
    </ligand>
</feature>
<feature type="binding site" evidence="1">
    <location>
        <position position="119"/>
    </location>
    <ligand>
        <name>[4Fe-4S] cluster</name>
        <dbReference type="ChEBI" id="CHEBI:49883"/>
        <label>2</label>
    </ligand>
</feature>
<feature type="binding site" evidence="1">
    <location>
        <position position="123"/>
    </location>
    <ligand>
        <name>[4Fe-4S] cluster</name>
        <dbReference type="ChEBI" id="CHEBI:49883"/>
        <label>1</label>
    </ligand>
</feature>
<evidence type="ECO:0000255" key="1">
    <source>
        <dbReference type="HAMAP-Rule" id="MF_01351"/>
    </source>
</evidence>
<gene>
    <name evidence="1" type="primary">nuoI</name>
    <name type="ordered locus">Noca_0528</name>
</gene>
<dbReference type="EC" id="7.1.1.-" evidence="1"/>
<dbReference type="EMBL" id="CP000509">
    <property type="protein sequence ID" value="ABL80070.1"/>
    <property type="molecule type" value="Genomic_DNA"/>
</dbReference>
<dbReference type="RefSeq" id="WP_011754020.1">
    <property type="nucleotide sequence ID" value="NC_008699.1"/>
</dbReference>
<dbReference type="SMR" id="A1SE35"/>
<dbReference type="STRING" id="196162.Noca_0528"/>
<dbReference type="KEGG" id="nca:Noca_0528"/>
<dbReference type="eggNOG" id="COG1143">
    <property type="taxonomic scope" value="Bacteria"/>
</dbReference>
<dbReference type="HOGENOM" id="CLU_067218_4_0_11"/>
<dbReference type="OrthoDB" id="9808559at2"/>
<dbReference type="Proteomes" id="UP000000640">
    <property type="component" value="Chromosome"/>
</dbReference>
<dbReference type="GO" id="GO:0005886">
    <property type="term" value="C:plasma membrane"/>
    <property type="evidence" value="ECO:0007669"/>
    <property type="project" value="UniProtKB-SubCell"/>
</dbReference>
<dbReference type="GO" id="GO:0051539">
    <property type="term" value="F:4 iron, 4 sulfur cluster binding"/>
    <property type="evidence" value="ECO:0007669"/>
    <property type="project" value="UniProtKB-KW"/>
</dbReference>
<dbReference type="GO" id="GO:0005506">
    <property type="term" value="F:iron ion binding"/>
    <property type="evidence" value="ECO:0007669"/>
    <property type="project" value="UniProtKB-UniRule"/>
</dbReference>
<dbReference type="GO" id="GO:0050136">
    <property type="term" value="F:NADH:ubiquinone reductase (non-electrogenic) activity"/>
    <property type="evidence" value="ECO:0007669"/>
    <property type="project" value="UniProtKB-UniRule"/>
</dbReference>
<dbReference type="GO" id="GO:0048038">
    <property type="term" value="F:quinone binding"/>
    <property type="evidence" value="ECO:0007669"/>
    <property type="project" value="UniProtKB-KW"/>
</dbReference>
<dbReference type="GO" id="GO:0009060">
    <property type="term" value="P:aerobic respiration"/>
    <property type="evidence" value="ECO:0007669"/>
    <property type="project" value="TreeGrafter"/>
</dbReference>
<dbReference type="FunFam" id="3.30.70.3270:FF:000007">
    <property type="entry name" value="NADH-quinone oxidoreductase subunit I"/>
    <property type="match status" value="1"/>
</dbReference>
<dbReference type="Gene3D" id="3.30.70.3270">
    <property type="match status" value="1"/>
</dbReference>
<dbReference type="HAMAP" id="MF_01351">
    <property type="entry name" value="NDH1_NuoI"/>
    <property type="match status" value="1"/>
</dbReference>
<dbReference type="InterPro" id="IPR017896">
    <property type="entry name" value="4Fe4S_Fe-S-bd"/>
</dbReference>
<dbReference type="InterPro" id="IPR017900">
    <property type="entry name" value="4Fe4S_Fe_S_CS"/>
</dbReference>
<dbReference type="InterPro" id="IPR010226">
    <property type="entry name" value="NADH_quinone_OxRdtase_chainI"/>
</dbReference>
<dbReference type="NCBIfam" id="TIGR01971">
    <property type="entry name" value="NuoI"/>
    <property type="match status" value="1"/>
</dbReference>
<dbReference type="NCBIfam" id="NF004537">
    <property type="entry name" value="PRK05888.1-3"/>
    <property type="match status" value="1"/>
</dbReference>
<dbReference type="PANTHER" id="PTHR10849:SF20">
    <property type="entry name" value="NADH DEHYDROGENASE [UBIQUINONE] IRON-SULFUR PROTEIN 8, MITOCHONDRIAL"/>
    <property type="match status" value="1"/>
</dbReference>
<dbReference type="PANTHER" id="PTHR10849">
    <property type="entry name" value="NADH DEHYDROGENASE UBIQUINONE IRON-SULFUR PROTEIN 8, MITOCHONDRIAL"/>
    <property type="match status" value="1"/>
</dbReference>
<dbReference type="Pfam" id="PF12838">
    <property type="entry name" value="Fer4_7"/>
    <property type="match status" value="1"/>
</dbReference>
<dbReference type="SUPFAM" id="SSF54862">
    <property type="entry name" value="4Fe-4S ferredoxins"/>
    <property type="match status" value="1"/>
</dbReference>
<dbReference type="PROSITE" id="PS00198">
    <property type="entry name" value="4FE4S_FER_1"/>
    <property type="match status" value="2"/>
</dbReference>
<dbReference type="PROSITE" id="PS51379">
    <property type="entry name" value="4FE4S_FER_2"/>
    <property type="match status" value="2"/>
</dbReference>
<keyword id="KW-0004">4Fe-4S</keyword>
<keyword id="KW-1003">Cell membrane</keyword>
<keyword id="KW-0408">Iron</keyword>
<keyword id="KW-0411">Iron-sulfur</keyword>
<keyword id="KW-0472">Membrane</keyword>
<keyword id="KW-0479">Metal-binding</keyword>
<keyword id="KW-0520">NAD</keyword>
<keyword id="KW-0874">Quinone</keyword>
<keyword id="KW-1185">Reference proteome</keyword>
<keyword id="KW-0677">Repeat</keyword>
<keyword id="KW-1278">Translocase</keyword>
<keyword id="KW-0830">Ubiquinone</keyword>
<reference key="1">
    <citation type="submission" date="2006-12" db="EMBL/GenBank/DDBJ databases">
        <title>Complete sequence of chromosome 1 of Nocardioides sp. JS614.</title>
        <authorList>
            <person name="Copeland A."/>
            <person name="Lucas S."/>
            <person name="Lapidus A."/>
            <person name="Barry K."/>
            <person name="Detter J.C."/>
            <person name="Glavina del Rio T."/>
            <person name="Hammon N."/>
            <person name="Israni S."/>
            <person name="Dalin E."/>
            <person name="Tice H."/>
            <person name="Pitluck S."/>
            <person name="Thompson L.S."/>
            <person name="Brettin T."/>
            <person name="Bruce D."/>
            <person name="Han C."/>
            <person name="Tapia R."/>
            <person name="Schmutz J."/>
            <person name="Larimer F."/>
            <person name="Land M."/>
            <person name="Hauser L."/>
            <person name="Kyrpides N."/>
            <person name="Kim E."/>
            <person name="Mattes T."/>
            <person name="Gossett J."/>
            <person name="Richardson P."/>
        </authorList>
    </citation>
    <scope>NUCLEOTIDE SEQUENCE [LARGE SCALE GENOMIC DNA]</scope>
    <source>
        <strain>ATCC BAA-499 / JS614</strain>
    </source>
</reference>